<dbReference type="EC" id="2.7.1.50" evidence="1"/>
<dbReference type="EMBL" id="FM178380">
    <property type="protein sequence ID" value="CAQ81245.1"/>
    <property type="molecule type" value="Genomic_DNA"/>
</dbReference>
<dbReference type="SMR" id="B6ERB4"/>
<dbReference type="KEGG" id="vsa:VSAL_II0491"/>
<dbReference type="eggNOG" id="COG2145">
    <property type="taxonomic scope" value="Bacteria"/>
</dbReference>
<dbReference type="HOGENOM" id="CLU_019943_0_1_6"/>
<dbReference type="UniPathway" id="UPA00060">
    <property type="reaction ID" value="UER00139"/>
</dbReference>
<dbReference type="Proteomes" id="UP000001730">
    <property type="component" value="Chromosome 2"/>
</dbReference>
<dbReference type="GO" id="GO:0005524">
    <property type="term" value="F:ATP binding"/>
    <property type="evidence" value="ECO:0007669"/>
    <property type="project" value="UniProtKB-UniRule"/>
</dbReference>
<dbReference type="GO" id="GO:0004417">
    <property type="term" value="F:hydroxyethylthiazole kinase activity"/>
    <property type="evidence" value="ECO:0007669"/>
    <property type="project" value="UniProtKB-UniRule"/>
</dbReference>
<dbReference type="GO" id="GO:0000287">
    <property type="term" value="F:magnesium ion binding"/>
    <property type="evidence" value="ECO:0007669"/>
    <property type="project" value="UniProtKB-UniRule"/>
</dbReference>
<dbReference type="GO" id="GO:0009228">
    <property type="term" value="P:thiamine biosynthetic process"/>
    <property type="evidence" value="ECO:0007669"/>
    <property type="project" value="UniProtKB-KW"/>
</dbReference>
<dbReference type="GO" id="GO:0009229">
    <property type="term" value="P:thiamine diphosphate biosynthetic process"/>
    <property type="evidence" value="ECO:0007669"/>
    <property type="project" value="UniProtKB-UniRule"/>
</dbReference>
<dbReference type="CDD" id="cd01170">
    <property type="entry name" value="THZ_kinase"/>
    <property type="match status" value="1"/>
</dbReference>
<dbReference type="Gene3D" id="3.40.1190.20">
    <property type="match status" value="1"/>
</dbReference>
<dbReference type="HAMAP" id="MF_00228">
    <property type="entry name" value="Thz_kinase"/>
    <property type="match status" value="1"/>
</dbReference>
<dbReference type="InterPro" id="IPR000417">
    <property type="entry name" value="Hyethyz_kinase"/>
</dbReference>
<dbReference type="InterPro" id="IPR029056">
    <property type="entry name" value="Ribokinase-like"/>
</dbReference>
<dbReference type="NCBIfam" id="NF006830">
    <property type="entry name" value="PRK09355.1"/>
    <property type="match status" value="1"/>
</dbReference>
<dbReference type="NCBIfam" id="TIGR00694">
    <property type="entry name" value="thiM"/>
    <property type="match status" value="1"/>
</dbReference>
<dbReference type="Pfam" id="PF02110">
    <property type="entry name" value="HK"/>
    <property type="match status" value="1"/>
</dbReference>
<dbReference type="PIRSF" id="PIRSF000513">
    <property type="entry name" value="Thz_kinase"/>
    <property type="match status" value="1"/>
</dbReference>
<dbReference type="PRINTS" id="PR01099">
    <property type="entry name" value="HYETHTZKNASE"/>
</dbReference>
<dbReference type="SUPFAM" id="SSF53613">
    <property type="entry name" value="Ribokinase-like"/>
    <property type="match status" value="1"/>
</dbReference>
<proteinExistence type="inferred from homology"/>
<protein>
    <recommendedName>
        <fullName evidence="1">Hydroxyethylthiazole kinase</fullName>
        <ecNumber evidence="1">2.7.1.50</ecNumber>
    </recommendedName>
    <alternativeName>
        <fullName evidence="1">4-methyl-5-beta-hydroxyethylthiazole kinase</fullName>
        <shortName evidence="1">TH kinase</shortName>
        <shortName evidence="1">Thz kinase</shortName>
    </alternativeName>
</protein>
<accession>B6ERB4</accession>
<keyword id="KW-0067">ATP-binding</keyword>
<keyword id="KW-0418">Kinase</keyword>
<keyword id="KW-0460">Magnesium</keyword>
<keyword id="KW-0479">Metal-binding</keyword>
<keyword id="KW-0547">Nucleotide-binding</keyword>
<keyword id="KW-0784">Thiamine biosynthesis</keyword>
<keyword id="KW-0808">Transferase</keyword>
<evidence type="ECO:0000255" key="1">
    <source>
        <dbReference type="HAMAP-Rule" id="MF_00228"/>
    </source>
</evidence>
<comment type="function">
    <text evidence="1">Catalyzes the phosphorylation of the hydroxyl group of 4-methyl-5-beta-hydroxyethylthiazole (THZ).</text>
</comment>
<comment type="catalytic activity">
    <reaction evidence="1">
        <text>5-(2-hydroxyethyl)-4-methylthiazole + ATP = 4-methyl-5-(2-phosphooxyethyl)-thiazole + ADP + H(+)</text>
        <dbReference type="Rhea" id="RHEA:24212"/>
        <dbReference type="ChEBI" id="CHEBI:15378"/>
        <dbReference type="ChEBI" id="CHEBI:17957"/>
        <dbReference type="ChEBI" id="CHEBI:30616"/>
        <dbReference type="ChEBI" id="CHEBI:58296"/>
        <dbReference type="ChEBI" id="CHEBI:456216"/>
        <dbReference type="EC" id="2.7.1.50"/>
    </reaction>
</comment>
<comment type="cofactor">
    <cofactor evidence="1">
        <name>Mg(2+)</name>
        <dbReference type="ChEBI" id="CHEBI:18420"/>
    </cofactor>
</comment>
<comment type="pathway">
    <text evidence="1">Cofactor biosynthesis; thiamine diphosphate biosynthesis; 4-methyl-5-(2-phosphoethyl)-thiazole from 5-(2-hydroxyethyl)-4-methylthiazole: step 1/1.</text>
</comment>
<comment type="similarity">
    <text evidence="1">Belongs to the Thz kinase family.</text>
</comment>
<name>THIM_ALISL</name>
<sequence length="264" mass="27757">MNTQEIIEALAMLREKKPLVVNITNYVVMNNTANALLALGASPIMAHSQQEMAEMMSFSGALVINIGTLDSVWTPRMHFAVEQANLNNKVVVLDPVGCGASQLRTQTARQIAEAANTLIIRGNASEIIALAGENAQSKGVDALDSSDSALGAACYVAQQYQCSVVISGETDYVVTKEAQYKLNNGHAMMPFVTGMGCTHTALTGAFAAIGDHSGVAATAVLGVAGEIAAEQSAGPGSLQINLLDTLYQLDEETLMNRLKLTVNA</sequence>
<organism>
    <name type="scientific">Aliivibrio salmonicida (strain LFI1238)</name>
    <name type="common">Vibrio salmonicida (strain LFI1238)</name>
    <dbReference type="NCBI Taxonomy" id="316275"/>
    <lineage>
        <taxon>Bacteria</taxon>
        <taxon>Pseudomonadati</taxon>
        <taxon>Pseudomonadota</taxon>
        <taxon>Gammaproteobacteria</taxon>
        <taxon>Vibrionales</taxon>
        <taxon>Vibrionaceae</taxon>
        <taxon>Aliivibrio</taxon>
    </lineage>
</organism>
<feature type="chain" id="PRO_0000383819" description="Hydroxyethylthiazole kinase">
    <location>
        <begin position="1"/>
        <end position="264"/>
    </location>
</feature>
<feature type="binding site" evidence="1">
    <location>
        <position position="45"/>
    </location>
    <ligand>
        <name>substrate</name>
    </ligand>
</feature>
<feature type="binding site" evidence="1">
    <location>
        <position position="121"/>
    </location>
    <ligand>
        <name>ATP</name>
        <dbReference type="ChEBI" id="CHEBI:30616"/>
    </ligand>
</feature>
<feature type="binding site" evidence="1">
    <location>
        <position position="167"/>
    </location>
    <ligand>
        <name>ATP</name>
        <dbReference type="ChEBI" id="CHEBI:30616"/>
    </ligand>
</feature>
<feature type="binding site" evidence="1">
    <location>
        <position position="194"/>
    </location>
    <ligand>
        <name>substrate</name>
    </ligand>
</feature>
<gene>
    <name evidence="1" type="primary">thiM</name>
    <name type="ordered locus">VSAL_II0491</name>
</gene>
<reference key="1">
    <citation type="journal article" date="2008" name="BMC Genomics">
        <title>The genome sequence of the fish pathogen Aliivibrio salmonicida strain LFI1238 shows extensive evidence of gene decay.</title>
        <authorList>
            <person name="Hjerde E."/>
            <person name="Lorentzen M.S."/>
            <person name="Holden M.T."/>
            <person name="Seeger K."/>
            <person name="Paulsen S."/>
            <person name="Bason N."/>
            <person name="Churcher C."/>
            <person name="Harris D."/>
            <person name="Norbertczak H."/>
            <person name="Quail M.A."/>
            <person name="Sanders S."/>
            <person name="Thurston S."/>
            <person name="Parkhill J."/>
            <person name="Willassen N.P."/>
            <person name="Thomson N.R."/>
        </authorList>
    </citation>
    <scope>NUCLEOTIDE SEQUENCE [LARGE SCALE GENOMIC DNA]</scope>
    <source>
        <strain>LFI1238</strain>
    </source>
</reference>